<proteinExistence type="inferred from homology"/>
<feature type="chain" id="PRO_0000146055" description="Phosphoglycerate kinase 2">
    <location>
        <begin position="1"/>
        <end position="416"/>
    </location>
</feature>
<feature type="binding site" evidence="1">
    <location>
        <begin position="28"/>
        <end position="30"/>
    </location>
    <ligand>
        <name>substrate</name>
    </ligand>
</feature>
<feature type="binding site" evidence="1">
    <location>
        <position position="44"/>
    </location>
    <ligand>
        <name>substrate</name>
    </ligand>
</feature>
<feature type="binding site" evidence="1">
    <location>
        <begin position="65"/>
        <end position="68"/>
    </location>
    <ligand>
        <name>substrate</name>
    </ligand>
</feature>
<feature type="binding site" evidence="1">
    <location>
        <position position="122"/>
    </location>
    <ligand>
        <name>substrate</name>
    </ligand>
</feature>
<feature type="binding site" evidence="1">
    <location>
        <position position="162"/>
    </location>
    <ligand>
        <name>substrate</name>
    </ligand>
</feature>
<feature type="binding site" evidence="1">
    <location>
        <position position="337"/>
    </location>
    <ligand>
        <name>ATP</name>
        <dbReference type="ChEBI" id="CHEBI:30616"/>
    </ligand>
</feature>
<feature type="binding site" evidence="1">
    <location>
        <begin position="362"/>
        <end position="365"/>
    </location>
    <ligand>
        <name>ATP</name>
        <dbReference type="ChEBI" id="CHEBI:30616"/>
    </ligand>
</feature>
<dbReference type="EC" id="2.7.2.3" evidence="1"/>
<dbReference type="EMBL" id="AE010299">
    <property type="protein sequence ID" value="AAM06948.1"/>
    <property type="molecule type" value="Genomic_DNA"/>
</dbReference>
<dbReference type="RefSeq" id="WP_011023501.1">
    <property type="nucleotide sequence ID" value="NC_003552.1"/>
</dbReference>
<dbReference type="SMR" id="Q8TK32"/>
<dbReference type="FunCoup" id="Q8TK32">
    <property type="interactions" value="191"/>
</dbReference>
<dbReference type="STRING" id="188937.MA_3592"/>
<dbReference type="EnsemblBacteria" id="AAM06948">
    <property type="protein sequence ID" value="AAM06948"/>
    <property type="gene ID" value="MA_3592"/>
</dbReference>
<dbReference type="GeneID" id="1475485"/>
<dbReference type="KEGG" id="mac:MA_3592"/>
<dbReference type="HOGENOM" id="CLU_025427_0_2_2"/>
<dbReference type="InParanoid" id="Q8TK32"/>
<dbReference type="OrthoDB" id="6575at2157"/>
<dbReference type="PhylomeDB" id="Q8TK32"/>
<dbReference type="UniPathway" id="UPA00109">
    <property type="reaction ID" value="UER00185"/>
</dbReference>
<dbReference type="Proteomes" id="UP000002487">
    <property type="component" value="Chromosome"/>
</dbReference>
<dbReference type="GO" id="GO:0005829">
    <property type="term" value="C:cytosol"/>
    <property type="evidence" value="ECO:0000318"/>
    <property type="project" value="GO_Central"/>
</dbReference>
<dbReference type="GO" id="GO:0043531">
    <property type="term" value="F:ADP binding"/>
    <property type="evidence" value="ECO:0000318"/>
    <property type="project" value="GO_Central"/>
</dbReference>
<dbReference type="GO" id="GO:0005524">
    <property type="term" value="F:ATP binding"/>
    <property type="evidence" value="ECO:0000318"/>
    <property type="project" value="GO_Central"/>
</dbReference>
<dbReference type="GO" id="GO:0004618">
    <property type="term" value="F:phosphoglycerate kinase activity"/>
    <property type="evidence" value="ECO:0000318"/>
    <property type="project" value="GO_Central"/>
</dbReference>
<dbReference type="GO" id="GO:0006094">
    <property type="term" value="P:gluconeogenesis"/>
    <property type="evidence" value="ECO:0000318"/>
    <property type="project" value="GO_Central"/>
</dbReference>
<dbReference type="GO" id="GO:0006096">
    <property type="term" value="P:glycolytic process"/>
    <property type="evidence" value="ECO:0000318"/>
    <property type="project" value="GO_Central"/>
</dbReference>
<dbReference type="FunFam" id="3.40.50.1260:FF:000006">
    <property type="entry name" value="Phosphoglycerate kinase"/>
    <property type="match status" value="1"/>
</dbReference>
<dbReference type="FunFam" id="3.40.50.1260:FF:000012">
    <property type="entry name" value="Phosphoglycerate kinase"/>
    <property type="match status" value="1"/>
</dbReference>
<dbReference type="Gene3D" id="3.40.50.1260">
    <property type="entry name" value="Phosphoglycerate kinase, N-terminal domain"/>
    <property type="match status" value="2"/>
</dbReference>
<dbReference type="HAMAP" id="MF_00145">
    <property type="entry name" value="Phosphoglyc_kinase"/>
    <property type="match status" value="1"/>
</dbReference>
<dbReference type="InterPro" id="IPR001576">
    <property type="entry name" value="Phosphoglycerate_kinase"/>
</dbReference>
<dbReference type="InterPro" id="IPR015824">
    <property type="entry name" value="Phosphoglycerate_kinase_N"/>
</dbReference>
<dbReference type="InterPro" id="IPR036043">
    <property type="entry name" value="Phosphoglycerate_kinase_sf"/>
</dbReference>
<dbReference type="PANTHER" id="PTHR11406">
    <property type="entry name" value="PHOSPHOGLYCERATE KINASE"/>
    <property type="match status" value="1"/>
</dbReference>
<dbReference type="PANTHER" id="PTHR11406:SF23">
    <property type="entry name" value="PHOSPHOGLYCERATE KINASE 1, CHLOROPLASTIC-RELATED"/>
    <property type="match status" value="1"/>
</dbReference>
<dbReference type="Pfam" id="PF00162">
    <property type="entry name" value="PGK"/>
    <property type="match status" value="1"/>
</dbReference>
<dbReference type="PIRSF" id="PIRSF000724">
    <property type="entry name" value="Pgk"/>
    <property type="match status" value="1"/>
</dbReference>
<dbReference type="PRINTS" id="PR00477">
    <property type="entry name" value="PHGLYCKINASE"/>
</dbReference>
<dbReference type="SUPFAM" id="SSF53748">
    <property type="entry name" value="Phosphoglycerate kinase"/>
    <property type="match status" value="1"/>
</dbReference>
<sequence length="416" mass="45499">MLRVMTSRNFLTIDDFDIRGKTILLRVDMNSPMDTQGHILDDMRIKSHIATLKDLESAKVVLLAHQSRPGKKDFTTMKPHAHLLSRYLGKQVTYVDDIFGTFAKTHIASMEDGDVIMLENVRFYSEESLERTPAEQANTYMVKKLAPFVDIFLNDAFAVAHRSHLSVVGFTEVLPSGAGRVMEKELVSLDRGVKGGERPSIFVLGGAKVDDSLRVTENVLTSGGADRVLLTGVVANVALAASGVNIGKVNMDFIKSQGYENQIEKARGLLAKFKDRIGLPKDVALNDNRERVEVHISELNSDSLPINDIGLETIVDYTNEIQNSKTVVLNGPAGVSEIEDFALGTHEIIKAAIKSDFSIIGGGHISVEVAHLGLEHRFSHISTGGGACIDYLAGEKLPGVESLKAAYIKYQEAKKL</sequence>
<protein>
    <recommendedName>
        <fullName evidence="1">Phosphoglycerate kinase 2</fullName>
        <ecNumber evidence="1">2.7.2.3</ecNumber>
    </recommendedName>
</protein>
<comment type="catalytic activity">
    <reaction evidence="1">
        <text>(2R)-3-phosphoglycerate + ATP = (2R)-3-phospho-glyceroyl phosphate + ADP</text>
        <dbReference type="Rhea" id="RHEA:14801"/>
        <dbReference type="ChEBI" id="CHEBI:30616"/>
        <dbReference type="ChEBI" id="CHEBI:57604"/>
        <dbReference type="ChEBI" id="CHEBI:58272"/>
        <dbReference type="ChEBI" id="CHEBI:456216"/>
        <dbReference type="EC" id="2.7.2.3"/>
    </reaction>
</comment>
<comment type="pathway">
    <text evidence="1">Carbohydrate degradation; glycolysis; pyruvate from D-glyceraldehyde 3-phosphate: step 2/5.</text>
</comment>
<comment type="subunit">
    <text evidence="1">Monomer.</text>
</comment>
<comment type="subcellular location">
    <subcellularLocation>
        <location evidence="1">Cytoplasm</location>
    </subcellularLocation>
</comment>
<comment type="similarity">
    <text evidence="1">Belongs to the phosphoglycerate kinase family.</text>
</comment>
<gene>
    <name evidence="1" type="primary">pgk2</name>
    <name type="ordered locus">MA_3592</name>
</gene>
<accession>Q8TK32</accession>
<keyword id="KW-0067">ATP-binding</keyword>
<keyword id="KW-0963">Cytoplasm</keyword>
<keyword id="KW-0324">Glycolysis</keyword>
<keyword id="KW-0418">Kinase</keyword>
<keyword id="KW-0547">Nucleotide-binding</keyword>
<keyword id="KW-1185">Reference proteome</keyword>
<keyword id="KW-0808">Transferase</keyword>
<organism>
    <name type="scientific">Methanosarcina acetivorans (strain ATCC 35395 / DSM 2834 / JCM 12185 / C2A)</name>
    <dbReference type="NCBI Taxonomy" id="188937"/>
    <lineage>
        <taxon>Archaea</taxon>
        <taxon>Methanobacteriati</taxon>
        <taxon>Methanobacteriota</taxon>
        <taxon>Stenosarchaea group</taxon>
        <taxon>Methanomicrobia</taxon>
        <taxon>Methanosarcinales</taxon>
        <taxon>Methanosarcinaceae</taxon>
        <taxon>Methanosarcina</taxon>
    </lineage>
</organism>
<name>PGK2_METAC</name>
<evidence type="ECO:0000255" key="1">
    <source>
        <dbReference type="HAMAP-Rule" id="MF_00145"/>
    </source>
</evidence>
<reference key="1">
    <citation type="journal article" date="2002" name="Genome Res.">
        <title>The genome of Methanosarcina acetivorans reveals extensive metabolic and physiological diversity.</title>
        <authorList>
            <person name="Galagan J.E."/>
            <person name="Nusbaum C."/>
            <person name="Roy A."/>
            <person name="Endrizzi M.G."/>
            <person name="Macdonald P."/>
            <person name="FitzHugh W."/>
            <person name="Calvo S."/>
            <person name="Engels R."/>
            <person name="Smirnov S."/>
            <person name="Atnoor D."/>
            <person name="Brown A."/>
            <person name="Allen N."/>
            <person name="Naylor J."/>
            <person name="Stange-Thomann N."/>
            <person name="DeArellano K."/>
            <person name="Johnson R."/>
            <person name="Linton L."/>
            <person name="McEwan P."/>
            <person name="McKernan K."/>
            <person name="Talamas J."/>
            <person name="Tirrell A."/>
            <person name="Ye W."/>
            <person name="Zimmer A."/>
            <person name="Barber R.D."/>
            <person name="Cann I."/>
            <person name="Graham D.E."/>
            <person name="Grahame D.A."/>
            <person name="Guss A.M."/>
            <person name="Hedderich R."/>
            <person name="Ingram-Smith C."/>
            <person name="Kuettner H.C."/>
            <person name="Krzycki J.A."/>
            <person name="Leigh J.A."/>
            <person name="Li W."/>
            <person name="Liu J."/>
            <person name="Mukhopadhyay B."/>
            <person name="Reeve J.N."/>
            <person name="Smith K."/>
            <person name="Springer T.A."/>
            <person name="Umayam L.A."/>
            <person name="White O."/>
            <person name="White R.H."/>
            <person name="de Macario E.C."/>
            <person name="Ferry J.G."/>
            <person name="Jarrell K.F."/>
            <person name="Jing H."/>
            <person name="Macario A.J.L."/>
            <person name="Paulsen I.T."/>
            <person name="Pritchett M."/>
            <person name="Sowers K.R."/>
            <person name="Swanson R.V."/>
            <person name="Zinder S.H."/>
            <person name="Lander E."/>
            <person name="Metcalf W.W."/>
            <person name="Birren B."/>
        </authorList>
    </citation>
    <scope>NUCLEOTIDE SEQUENCE [LARGE SCALE GENOMIC DNA]</scope>
    <source>
        <strain>ATCC 35395 / DSM 2834 / JCM 12185 / C2A</strain>
    </source>
</reference>